<feature type="chain" id="PRO_0000377191" description="tRNA dimethylallyltransferase">
    <location>
        <begin position="1"/>
        <end position="315"/>
    </location>
</feature>
<feature type="region of interest" description="Interaction with substrate tRNA" evidence="1">
    <location>
        <begin position="38"/>
        <end position="41"/>
    </location>
</feature>
<feature type="binding site" evidence="1">
    <location>
        <begin position="13"/>
        <end position="20"/>
    </location>
    <ligand>
        <name>ATP</name>
        <dbReference type="ChEBI" id="CHEBI:30616"/>
    </ligand>
</feature>
<feature type="binding site" evidence="1">
    <location>
        <begin position="15"/>
        <end position="20"/>
    </location>
    <ligand>
        <name>substrate</name>
    </ligand>
</feature>
<feature type="site" description="Interaction with substrate tRNA" evidence="1">
    <location>
        <position position="104"/>
    </location>
</feature>
<feature type="site" description="Interaction with substrate tRNA" evidence="1">
    <location>
        <position position="127"/>
    </location>
</feature>
<sequence length="315" mass="35194">MQAPQPLIIAIVGPTAVGKTAFSLDLAQALNGEIVSVDSRLVYRGMDIGTAKPTPAEQALVKHHLIDVVNPDQEYSLATYQAAAYAAIAQIQQQAKQPILVGGTGQYMAALLEGWSIPEVAPNYELRARYEQQAASEGHAALHQQLQTIDPEAAKAIDPTNVRRVIRALEVFHETGQPISQLQQRNPPHYRILTLDLERPRDELYARIDQRVDLMMREGLIAEVWALIRQGYGWELPSMSGLGYAEFRPLWQGQQSAGACISQLKFNTHRFARKQGAWFRRLPKRVSLDARHTDLLAQVQELLAMPEHAPIHTDH</sequence>
<evidence type="ECO:0000255" key="1">
    <source>
        <dbReference type="HAMAP-Rule" id="MF_00185"/>
    </source>
</evidence>
<gene>
    <name evidence="1" type="primary">miaA</name>
    <name type="ordered locus">Haur_4265</name>
</gene>
<organism>
    <name type="scientific">Herpetosiphon aurantiacus (strain ATCC 23779 / DSM 785 / 114-95)</name>
    <dbReference type="NCBI Taxonomy" id="316274"/>
    <lineage>
        <taxon>Bacteria</taxon>
        <taxon>Bacillati</taxon>
        <taxon>Chloroflexota</taxon>
        <taxon>Chloroflexia</taxon>
        <taxon>Herpetosiphonales</taxon>
        <taxon>Herpetosiphonaceae</taxon>
        <taxon>Herpetosiphon</taxon>
    </lineage>
</organism>
<name>MIAA_HERA2</name>
<comment type="function">
    <text evidence="1">Catalyzes the transfer of a dimethylallyl group onto the adenine at position 37 in tRNAs that read codons beginning with uridine, leading to the formation of N6-(dimethylallyl)adenosine (i(6)A).</text>
</comment>
<comment type="catalytic activity">
    <reaction evidence="1">
        <text>adenosine(37) in tRNA + dimethylallyl diphosphate = N(6)-dimethylallyladenosine(37) in tRNA + diphosphate</text>
        <dbReference type="Rhea" id="RHEA:26482"/>
        <dbReference type="Rhea" id="RHEA-COMP:10162"/>
        <dbReference type="Rhea" id="RHEA-COMP:10375"/>
        <dbReference type="ChEBI" id="CHEBI:33019"/>
        <dbReference type="ChEBI" id="CHEBI:57623"/>
        <dbReference type="ChEBI" id="CHEBI:74411"/>
        <dbReference type="ChEBI" id="CHEBI:74415"/>
        <dbReference type="EC" id="2.5.1.75"/>
    </reaction>
</comment>
<comment type="cofactor">
    <cofactor evidence="1">
        <name>Mg(2+)</name>
        <dbReference type="ChEBI" id="CHEBI:18420"/>
    </cofactor>
</comment>
<comment type="subunit">
    <text evidence="1">Monomer.</text>
</comment>
<comment type="similarity">
    <text evidence="1">Belongs to the IPP transferase family.</text>
</comment>
<protein>
    <recommendedName>
        <fullName evidence="1">tRNA dimethylallyltransferase</fullName>
        <ecNumber evidence="1">2.5.1.75</ecNumber>
    </recommendedName>
    <alternativeName>
        <fullName evidence="1">Dimethylallyl diphosphate:tRNA dimethylallyltransferase</fullName>
        <shortName evidence="1">DMAPP:tRNA dimethylallyltransferase</shortName>
        <shortName evidence="1">DMATase</shortName>
    </alternativeName>
    <alternativeName>
        <fullName evidence="1">Isopentenyl-diphosphate:tRNA isopentenyltransferase</fullName>
        <shortName evidence="1">IPP transferase</shortName>
        <shortName evidence="1">IPPT</shortName>
        <shortName evidence="1">IPTase</shortName>
    </alternativeName>
</protein>
<proteinExistence type="inferred from homology"/>
<accession>A9AY15</accession>
<dbReference type="EC" id="2.5.1.75" evidence="1"/>
<dbReference type="EMBL" id="CP000875">
    <property type="protein sequence ID" value="ABX06897.1"/>
    <property type="molecule type" value="Genomic_DNA"/>
</dbReference>
<dbReference type="SMR" id="A9AY15"/>
<dbReference type="FunCoup" id="A9AY15">
    <property type="interactions" value="530"/>
</dbReference>
<dbReference type="STRING" id="316274.Haur_4265"/>
<dbReference type="KEGG" id="hau:Haur_4265"/>
<dbReference type="eggNOG" id="COG0324">
    <property type="taxonomic scope" value="Bacteria"/>
</dbReference>
<dbReference type="HOGENOM" id="CLU_032616_0_1_0"/>
<dbReference type="InParanoid" id="A9AY15"/>
<dbReference type="Proteomes" id="UP000000787">
    <property type="component" value="Chromosome"/>
</dbReference>
<dbReference type="GO" id="GO:0005524">
    <property type="term" value="F:ATP binding"/>
    <property type="evidence" value="ECO:0007669"/>
    <property type="project" value="UniProtKB-UniRule"/>
</dbReference>
<dbReference type="GO" id="GO:0052381">
    <property type="term" value="F:tRNA dimethylallyltransferase activity"/>
    <property type="evidence" value="ECO:0007669"/>
    <property type="project" value="UniProtKB-UniRule"/>
</dbReference>
<dbReference type="GO" id="GO:0006400">
    <property type="term" value="P:tRNA modification"/>
    <property type="evidence" value="ECO:0007669"/>
    <property type="project" value="TreeGrafter"/>
</dbReference>
<dbReference type="CDD" id="cd02019">
    <property type="entry name" value="NK"/>
    <property type="match status" value="1"/>
</dbReference>
<dbReference type="FunFam" id="1.10.20.140:FF:000001">
    <property type="entry name" value="tRNA dimethylallyltransferase"/>
    <property type="match status" value="1"/>
</dbReference>
<dbReference type="Gene3D" id="1.10.20.140">
    <property type="match status" value="1"/>
</dbReference>
<dbReference type="Gene3D" id="3.40.50.300">
    <property type="entry name" value="P-loop containing nucleotide triphosphate hydrolases"/>
    <property type="match status" value="1"/>
</dbReference>
<dbReference type="HAMAP" id="MF_00185">
    <property type="entry name" value="IPP_trans"/>
    <property type="match status" value="1"/>
</dbReference>
<dbReference type="InterPro" id="IPR039657">
    <property type="entry name" value="Dimethylallyltransferase"/>
</dbReference>
<dbReference type="InterPro" id="IPR018022">
    <property type="entry name" value="IPT"/>
</dbReference>
<dbReference type="InterPro" id="IPR027417">
    <property type="entry name" value="P-loop_NTPase"/>
</dbReference>
<dbReference type="NCBIfam" id="TIGR00174">
    <property type="entry name" value="miaA"/>
    <property type="match status" value="1"/>
</dbReference>
<dbReference type="PANTHER" id="PTHR11088">
    <property type="entry name" value="TRNA DIMETHYLALLYLTRANSFERASE"/>
    <property type="match status" value="1"/>
</dbReference>
<dbReference type="PANTHER" id="PTHR11088:SF60">
    <property type="entry name" value="TRNA DIMETHYLALLYLTRANSFERASE"/>
    <property type="match status" value="1"/>
</dbReference>
<dbReference type="Pfam" id="PF01715">
    <property type="entry name" value="IPPT"/>
    <property type="match status" value="1"/>
</dbReference>
<dbReference type="SUPFAM" id="SSF52540">
    <property type="entry name" value="P-loop containing nucleoside triphosphate hydrolases"/>
    <property type="match status" value="2"/>
</dbReference>
<keyword id="KW-0067">ATP-binding</keyword>
<keyword id="KW-0460">Magnesium</keyword>
<keyword id="KW-0547">Nucleotide-binding</keyword>
<keyword id="KW-0808">Transferase</keyword>
<keyword id="KW-0819">tRNA processing</keyword>
<reference key="1">
    <citation type="journal article" date="2011" name="Stand. Genomic Sci.">
        <title>Complete genome sequence of the filamentous gliding predatory bacterium Herpetosiphon aurantiacus type strain (114-95(T)).</title>
        <authorList>
            <person name="Kiss H."/>
            <person name="Nett M."/>
            <person name="Domin N."/>
            <person name="Martin K."/>
            <person name="Maresca J.A."/>
            <person name="Copeland A."/>
            <person name="Lapidus A."/>
            <person name="Lucas S."/>
            <person name="Berry K.W."/>
            <person name="Glavina Del Rio T."/>
            <person name="Dalin E."/>
            <person name="Tice H."/>
            <person name="Pitluck S."/>
            <person name="Richardson P."/>
            <person name="Bruce D."/>
            <person name="Goodwin L."/>
            <person name="Han C."/>
            <person name="Detter J.C."/>
            <person name="Schmutz J."/>
            <person name="Brettin T."/>
            <person name="Land M."/>
            <person name="Hauser L."/>
            <person name="Kyrpides N.C."/>
            <person name="Ivanova N."/>
            <person name="Goeker M."/>
            <person name="Woyke T."/>
            <person name="Klenk H.P."/>
            <person name="Bryant D.A."/>
        </authorList>
    </citation>
    <scope>NUCLEOTIDE SEQUENCE [LARGE SCALE GENOMIC DNA]</scope>
    <source>
        <strain>ATCC 23779 / DSM 785 / 114-95</strain>
    </source>
</reference>